<evidence type="ECO:0000250" key="1">
    <source>
        <dbReference type="UniProtKB" id="P05198"/>
    </source>
</evidence>
<evidence type="ECO:0000250" key="2">
    <source>
        <dbReference type="UniProtKB" id="P56286"/>
    </source>
</evidence>
<evidence type="ECO:0000250" key="3">
    <source>
        <dbReference type="UniProtKB" id="P68101"/>
    </source>
</evidence>
<evidence type="ECO:0000250" key="4">
    <source>
        <dbReference type="UniProtKB" id="Q6ZWX6"/>
    </source>
</evidence>
<evidence type="ECO:0000255" key="5">
    <source>
        <dbReference type="PROSITE-ProRule" id="PRU00180"/>
    </source>
</evidence>
<evidence type="ECO:0000269" key="6">
    <source>
    </source>
</evidence>
<evidence type="ECO:0000305" key="7"/>
<comment type="function">
    <text evidence="1">Member of the eIF2 complex that functions in the early steps of protein synthesis by forming a ternary complex with GTP and initiator tRNA. This complex binds to a 40S ribosomal subunit, followed by mRNA binding to form a 43S pre-initiation complex. Junction of the 60S ribosomal subunit to form the 80S initiation complex is preceded by hydrolysis of the GTP bound to eIF2 and release of an eIF2-GDP binary complex. In order for eIF2 to recycle and catalyze another round of initiation, the GDP bound to eIF2 must exchange with GTP by way of a reaction catalyzed by eIF2B. EIF2S1/eIF2-alpha is a key component of the integrated stress response (ISR), required for adaptation to various stress: phosphorylation by metabolic-stress sensing protein kinases (EIF2AK1/HRI, EIF2AK2/PKR, EIF2AK3/PERK and EIF2AK4/GCN2) in response to stress converts EIF2S1/eIF2-alpha in a global protein synthesis inhibitor, leading to a attenuation of cap-dependent translation, while concomitantly initiating the preferential translation of ISR-specific mRNAs, such as the transcriptional activators ATF4 and QRICH1, and hence allowing ATF4- and QRICH1-mediated reprogramming. EIF2S1/eIF2-alpha also acts as an activator of mitophagy in response to mitochondrial damage: phosphorylation by EIF2AK1/HRI promotes relocalization to the mitochondrial surface, thereby triggering PRKN-independent mitophagy (By similarity).</text>
</comment>
<comment type="activity regulation">
    <text evidence="1">Activity is regulated by phosphorylation at Ser-49 and Ser-52, which stabilizes the eIF2/GDP/eIF2B complex and prevents the eIF2B-mediated exchange of GDP for GTP, thereby preventing the formation of the 43S pre-initiation complex (43S PIC). This results in the global attenuation of 5' cap-dependent protein synthesis and concomitant translation of ISR-specific mRNAs that contain a short upstream open reading frame (uORF) in their 5' UTR, such as ATF4, ATF5, DDIT3/CHOP and PPP1R15A/GADD34.</text>
</comment>
<comment type="subunit">
    <text evidence="1 3 4">Eukaryotic translation initiation factor 2 eIF2 is a heterotrimeric complex composed of an alpha (EIF2S1), a beta (EIF2S2) and a gamma (EIF2S3) chain (By similarity). eIF2 is member of the 43S pre-initiation complex (43S PIC). eIF2 forms a complex with at least CELF1/CUGBP1, CALR, CALR3, EIF2S1, EIF2S2, HSP90B1 and HSPA5 (By similarity). Interaction with METAP2 protects EIF2S1 from inhibitory phosphorylation (By similarity). Interacts with ABCF1 (By similarity). Associates with ribosomes (By similarity). Interacts with DDX3X in an RNA-independent manner (By similarity).</text>
</comment>
<comment type="subcellular location">
    <subcellularLocation>
        <location evidence="4">Cytoplasm</location>
        <location evidence="4">Stress granule</location>
    </subcellularLocation>
    <subcellularLocation>
        <location evidence="2">Cytoplasm</location>
        <location evidence="2">Cytosol</location>
    </subcellularLocation>
    <subcellularLocation>
        <location evidence="1">Mitochondrion</location>
    </subcellularLocation>
    <text evidence="1 4">Colocalizes with NANOS3 in the stress granules (By similarity). Relocalizes to the surface of mitochondria in response to mitochondrial damage and phosphorylation by EIF2AK1/HRI (By similarity).</text>
</comment>
<comment type="PTM">
    <text evidence="1 4">Phosphorylation at Ser-48 and Ser-51 stabilizes the eIF-2/GDP/eIF2B complex and prevents GDP/GTP exchange reaction, thus impairing the recycling of eIF-2 between successive rounds of initiation and leading to global inhibition of translation, while concomitantly initiating the preferential translation of integrated stress response (ISR)-specific mRNAs (By similarity). Substrate for at least 4 kinases: EIF2AK1/HRI, EIF2AK2/PKR, EIF2AK3/PERK and EIF2AK4/GCN2 (By similarity). Phosphorylation on Ser-51 by the EIF2AK4/GCN2 protein kinase occurs in response to amino acid starvation and UV irradiation (By similarity). Phosphorylation at Ser-51 by the EIF2AK3/PERK protein kinase occurs in response to the unfolded protein response (By similarity). Phosphorylation at Ser-51 by EIF2AK1/HRI in response to mitochondrial damage promotes relocalization to the mitochondrial surface (By similarity).</text>
</comment>
<comment type="similarity">
    <text evidence="7">Belongs to the eIF-2-alpha family.</text>
</comment>
<comment type="caution">
    <text evidence="7">This gene should not be confused with EIF2A, with which it shares the alias EIF2A. Although both of these proteins function in binding initiator tRNA to the 40S ribosomal subunit, the eIF2 complex requires GTP, whereas the EIF2A protein does so in a codon-dependent manner.</text>
</comment>
<gene>
    <name type="primary">EIF2S1</name>
    <name type="synonym">EIF2A</name>
</gene>
<sequence length="52" mass="5974">PGLSCRFYQHKFPEVEDVVMVNVRSIAEMGAYVSLLEYNNIEGRILLSELSR</sequence>
<keyword id="KW-0963">Cytoplasm</keyword>
<keyword id="KW-0903">Direct protein sequencing</keyword>
<keyword id="KW-0396">Initiation factor</keyword>
<keyword id="KW-0496">Mitochondrion</keyword>
<keyword id="KW-0597">Phosphoprotein</keyword>
<keyword id="KW-0648">Protein biosynthesis</keyword>
<keyword id="KW-1185">Reference proteome</keyword>
<keyword id="KW-0694">RNA-binding</keyword>
<keyword id="KW-0810">Translation regulation</keyword>
<name>IF2A_RABIT</name>
<dbReference type="SMR" id="P83268"/>
<dbReference type="IntAct" id="P83268">
    <property type="interactions" value="1"/>
</dbReference>
<dbReference type="STRING" id="9986.ENSOCUP00000033238"/>
<dbReference type="iPTMnet" id="P83268"/>
<dbReference type="PaxDb" id="9986-ENSOCUP00000010342"/>
<dbReference type="eggNOG" id="KOG2916">
    <property type="taxonomic scope" value="Eukaryota"/>
</dbReference>
<dbReference type="InParanoid" id="P83268"/>
<dbReference type="Proteomes" id="UP000001811">
    <property type="component" value="Unplaced"/>
</dbReference>
<dbReference type="GO" id="GO:0010494">
    <property type="term" value="C:cytoplasmic stress granule"/>
    <property type="evidence" value="ECO:0000250"/>
    <property type="project" value="UniProtKB"/>
</dbReference>
<dbReference type="GO" id="GO:0005829">
    <property type="term" value="C:cytosol"/>
    <property type="evidence" value="ECO:0000304"/>
    <property type="project" value="Reactome"/>
</dbReference>
<dbReference type="GO" id="GO:0033290">
    <property type="term" value="C:eukaryotic 48S preinitiation complex"/>
    <property type="evidence" value="ECO:0007669"/>
    <property type="project" value="TreeGrafter"/>
</dbReference>
<dbReference type="GO" id="GO:0005850">
    <property type="term" value="C:eukaryotic translation initiation factor 2 complex"/>
    <property type="evidence" value="ECO:0000250"/>
    <property type="project" value="UniProtKB"/>
</dbReference>
<dbReference type="GO" id="GO:0005739">
    <property type="term" value="C:mitochondrion"/>
    <property type="evidence" value="ECO:0000250"/>
    <property type="project" value="UniProtKB"/>
</dbReference>
<dbReference type="GO" id="GO:0005525">
    <property type="term" value="F:GTP binding"/>
    <property type="evidence" value="ECO:0000303"/>
    <property type="project" value="UniProtKB"/>
</dbReference>
<dbReference type="GO" id="GO:0043022">
    <property type="term" value="F:ribosome binding"/>
    <property type="evidence" value="ECO:0000250"/>
    <property type="project" value="UniProtKB"/>
</dbReference>
<dbReference type="GO" id="GO:0003723">
    <property type="term" value="F:RNA binding"/>
    <property type="evidence" value="ECO:0007669"/>
    <property type="project" value="UniProtKB-KW"/>
</dbReference>
<dbReference type="GO" id="GO:0003743">
    <property type="term" value="F:translation initiation factor activity"/>
    <property type="evidence" value="ECO:0000303"/>
    <property type="project" value="UniProtKB"/>
</dbReference>
<dbReference type="GO" id="GO:0034198">
    <property type="term" value="P:cellular response to amino acid starvation"/>
    <property type="evidence" value="ECO:0000250"/>
    <property type="project" value="UniProtKB"/>
</dbReference>
<dbReference type="GO" id="GO:0034644">
    <property type="term" value="P:cellular response to UV"/>
    <property type="evidence" value="ECO:0000250"/>
    <property type="project" value="UniProtKB"/>
</dbReference>
<dbReference type="GO" id="GO:0140468">
    <property type="term" value="P:HRI-mediated signaling"/>
    <property type="evidence" value="ECO:0000250"/>
    <property type="project" value="UniProtKB"/>
</dbReference>
<dbReference type="GO" id="GO:0000423">
    <property type="term" value="P:mitophagy"/>
    <property type="evidence" value="ECO:0000250"/>
    <property type="project" value="UniProtKB"/>
</dbReference>
<dbReference type="GO" id="GO:0032057">
    <property type="term" value="P:negative regulation of translational initiation in response to stress"/>
    <property type="evidence" value="ECO:0000250"/>
    <property type="project" value="UniProtKB"/>
</dbReference>
<dbReference type="GO" id="GO:0036499">
    <property type="term" value="P:PERK-mediated unfolded protein response"/>
    <property type="evidence" value="ECO:0000250"/>
    <property type="project" value="UniProtKB"/>
</dbReference>
<dbReference type="GO" id="GO:0034976">
    <property type="term" value="P:response to endoplasmic reticulum stress"/>
    <property type="evidence" value="ECO:0000250"/>
    <property type="project" value="UniProtKB"/>
</dbReference>
<dbReference type="GO" id="GO:0006413">
    <property type="term" value="P:translational initiation"/>
    <property type="evidence" value="ECO:0000303"/>
    <property type="project" value="UniProtKB"/>
</dbReference>
<dbReference type="Gene3D" id="2.40.50.140">
    <property type="entry name" value="Nucleic acid-binding proteins"/>
    <property type="match status" value="1"/>
</dbReference>
<dbReference type="InterPro" id="IPR012340">
    <property type="entry name" value="NA-bd_OB-fold"/>
</dbReference>
<dbReference type="InterPro" id="IPR003029">
    <property type="entry name" value="S1_domain"/>
</dbReference>
<dbReference type="InterPro" id="IPR011488">
    <property type="entry name" value="TIF_2_asu"/>
</dbReference>
<dbReference type="PANTHER" id="PTHR10602">
    <property type="entry name" value="EUKARYOTIC TRANSLATION INITIATION FACTOR 2 SUBUNIT 1"/>
    <property type="match status" value="1"/>
</dbReference>
<dbReference type="PANTHER" id="PTHR10602:SF0">
    <property type="entry name" value="EUKARYOTIC TRANSLATION INITIATION FACTOR 2 SUBUNIT 1"/>
    <property type="match status" value="1"/>
</dbReference>
<dbReference type="Pfam" id="PF00575">
    <property type="entry name" value="S1"/>
    <property type="match status" value="1"/>
</dbReference>
<dbReference type="SUPFAM" id="SSF50249">
    <property type="entry name" value="Nucleic acid-binding proteins"/>
    <property type="match status" value="1"/>
</dbReference>
<dbReference type="PROSITE" id="PS50126">
    <property type="entry name" value="S1"/>
    <property type="match status" value="1"/>
</dbReference>
<proteinExistence type="evidence at protein level"/>
<protein>
    <recommendedName>
        <fullName>Eukaryotic translation initiation factor 2 subunit 1</fullName>
    </recommendedName>
    <alternativeName>
        <fullName>Eukaryotic translation initiation factor 2 subunit alpha</fullName>
        <shortName>eIF-2-alpha</shortName>
        <shortName>eIF-2A</shortName>
        <shortName>eIF-2alpha</shortName>
        <shortName>eIF2-alpha</shortName>
    </alternativeName>
</protein>
<reference key="1">
    <citation type="journal article" date="1986" name="J. Biol. Chem.">
        <title>The NH2-terminal sequence of the alpha and gamma subunits of eukaryotic initiation factor 2 and the phosphorylation site for the heme-regulated eIF-2 alpha kinase.</title>
        <authorList>
            <person name="Wettenhall R.E.H."/>
            <person name="Kudlicki W."/>
            <person name="Kramer G."/>
            <person name="Hardesty B."/>
        </authorList>
    </citation>
    <scope>PROTEIN SEQUENCE</scope>
    <scope>PHOSPHORYLATION AT SER-48</scope>
    <source>
        <tissue>Reticulocyte</tissue>
    </source>
</reference>
<reference key="2">
    <citation type="journal article" date="1987" name="Arch. Biochem. Biophys.">
        <title>The purification and characterization of subunits alpha, beta, and gamma from the rabbit reticulocyte eukaryotic initiation factor 2.</title>
        <authorList>
            <person name="Schafer M.P."/>
            <person name="Fairwell T."/>
            <person name="Parker D.S."/>
            <person name="Knight M."/>
            <person name="Anderson W.F."/>
            <person name="Safer B."/>
        </authorList>
    </citation>
    <scope>PROTEIN SEQUENCE OF 1-23</scope>
    <source>
        <tissue>Reticulocyte</tissue>
    </source>
</reference>
<feature type="chain" id="PRO_0000137385" description="Eukaryotic translation initiation factor 2 subunit 1">
    <location>
        <begin position="1"/>
        <end position="52" status="greater than"/>
    </location>
</feature>
<feature type="domain" description="S1 motif" evidence="5">
    <location>
        <begin position="16"/>
        <end position="52" status="greater than"/>
    </location>
</feature>
<feature type="modified residue" description="Phosphoserine; by HRI" evidence="6">
    <location>
        <position position="48"/>
    </location>
</feature>
<feature type="modified residue" description="Phosphoserine" evidence="1">
    <location>
        <position position="51"/>
    </location>
</feature>
<feature type="unsure residue">
    <location>
        <position position="10"/>
    </location>
</feature>
<feature type="unsure residue">
    <location>
        <position position="44"/>
    </location>
</feature>
<feature type="unsure residue">
    <location>
        <position position="52"/>
    </location>
</feature>
<feature type="sequence conflict" description="In Ref. 2; AA sequence." evidence="7" ref="2">
    <original>H</original>
    <variation>R</variation>
    <location>
        <position position="10"/>
    </location>
</feature>
<feature type="sequence conflict" description="In Ref. 1; AA sequence." evidence="7" ref="1">
    <original>E</original>
    <variation>Q</variation>
    <location>
        <position position="16"/>
    </location>
</feature>
<feature type="non-terminal residue">
    <location>
        <position position="52"/>
    </location>
</feature>
<accession>P83268</accession>
<organism>
    <name type="scientific">Oryctolagus cuniculus</name>
    <name type="common">Rabbit</name>
    <dbReference type="NCBI Taxonomy" id="9986"/>
    <lineage>
        <taxon>Eukaryota</taxon>
        <taxon>Metazoa</taxon>
        <taxon>Chordata</taxon>
        <taxon>Craniata</taxon>
        <taxon>Vertebrata</taxon>
        <taxon>Euteleostomi</taxon>
        <taxon>Mammalia</taxon>
        <taxon>Eutheria</taxon>
        <taxon>Euarchontoglires</taxon>
        <taxon>Glires</taxon>
        <taxon>Lagomorpha</taxon>
        <taxon>Leporidae</taxon>
        <taxon>Oryctolagus</taxon>
    </lineage>
</organism>